<accession>Q8TYC2</accession>
<organism>
    <name type="scientific">Methanopyrus kandleri (strain AV19 / DSM 6324 / JCM 9639 / NBRC 100938)</name>
    <dbReference type="NCBI Taxonomy" id="190192"/>
    <lineage>
        <taxon>Archaea</taxon>
        <taxon>Methanobacteriati</taxon>
        <taxon>Methanobacteriota</taxon>
        <taxon>Methanomada group</taxon>
        <taxon>Methanopyri</taxon>
        <taxon>Methanopyrales</taxon>
        <taxon>Methanopyraceae</taxon>
        <taxon>Methanopyrus</taxon>
    </lineage>
</organism>
<comment type="function">
    <text evidence="1">Non-catalytic component of the exosome, which is a complex involved in RNA degradation. Contributes to the structuring of the Rrp41 active site.</text>
</comment>
<comment type="subunit">
    <text evidence="1">Component of the archaeal exosome complex. Forms a hexameric ring-like arrangement composed of 3 Rrp41-Rrp42 heterodimers. The hexameric ring associates with a trimer of Rrp4 and/or Csl4 subunits.</text>
</comment>
<comment type="subcellular location">
    <subcellularLocation>
        <location evidence="1">Cytoplasm</location>
    </subcellularLocation>
</comment>
<comment type="similarity">
    <text evidence="1">Belongs to the RNase PH family. Rrp42 subfamily.</text>
</comment>
<feature type="chain" id="PRO_0000139998" description="Exosome complex component Rrp42">
    <location>
        <begin position="1"/>
        <end position="267"/>
    </location>
</feature>
<keyword id="KW-0963">Cytoplasm</keyword>
<keyword id="KW-0271">Exosome</keyword>
<keyword id="KW-1185">Reference proteome</keyword>
<sequence>MDLDLLARIKRHEVLAAIRAGERIDGRDFEEFRPIEVRAGVISKANGSALVRLGNTQLVVGVKLEVGRPYPDSPNEGALAVNAELVPLADPSFEPGPPDENAIELSRVVDRGIRESEMIDLEELCIEEGEHCWVTFVDIHVLDHDGNLFDASMIGSVSALSITEVPKAEVVDDEVEVMEEDTEPLAINDFPISVTIAKVGEYLLVDPCLEEEVIMDTRLTVTVTESGEVCAVQKGELGDFPEHLLEDAIDLATKKAEEVRRTVKAQL</sequence>
<evidence type="ECO:0000255" key="1">
    <source>
        <dbReference type="HAMAP-Rule" id="MF_00622"/>
    </source>
</evidence>
<dbReference type="EMBL" id="AE009439">
    <property type="protein sequence ID" value="AAM01595.1"/>
    <property type="molecule type" value="Genomic_DNA"/>
</dbReference>
<dbReference type="RefSeq" id="WP_011018750.1">
    <property type="nucleotide sequence ID" value="NC_003551.1"/>
</dbReference>
<dbReference type="SMR" id="Q8TYC2"/>
<dbReference type="STRING" id="190192.MK0380"/>
<dbReference type="PaxDb" id="190192-MK0380"/>
<dbReference type="EnsemblBacteria" id="AAM01595">
    <property type="protein sequence ID" value="AAM01595"/>
    <property type="gene ID" value="MK0380"/>
</dbReference>
<dbReference type="GeneID" id="1477683"/>
<dbReference type="KEGG" id="mka:MK0380"/>
<dbReference type="PATRIC" id="fig|190192.8.peg.406"/>
<dbReference type="HOGENOM" id="CLU_038194_0_0_2"/>
<dbReference type="InParanoid" id="Q8TYC2"/>
<dbReference type="OrthoDB" id="30932at2157"/>
<dbReference type="Proteomes" id="UP000001826">
    <property type="component" value="Chromosome"/>
</dbReference>
<dbReference type="GO" id="GO:0000177">
    <property type="term" value="C:cytoplasmic exosome (RNase complex)"/>
    <property type="evidence" value="ECO:0007669"/>
    <property type="project" value="TreeGrafter"/>
</dbReference>
<dbReference type="GO" id="GO:0035925">
    <property type="term" value="F:mRNA 3'-UTR AU-rich region binding"/>
    <property type="evidence" value="ECO:0007669"/>
    <property type="project" value="TreeGrafter"/>
</dbReference>
<dbReference type="GO" id="GO:0016075">
    <property type="term" value="P:rRNA catabolic process"/>
    <property type="evidence" value="ECO:0007669"/>
    <property type="project" value="TreeGrafter"/>
</dbReference>
<dbReference type="CDD" id="cd11365">
    <property type="entry name" value="RNase_PH_archRRP42"/>
    <property type="match status" value="1"/>
</dbReference>
<dbReference type="FunFam" id="3.30.230.70:FF:000017">
    <property type="entry name" value="Exosome complex component Rrp42"/>
    <property type="match status" value="1"/>
</dbReference>
<dbReference type="Gene3D" id="3.30.230.70">
    <property type="entry name" value="GHMP Kinase, N-terminal domain"/>
    <property type="match status" value="1"/>
</dbReference>
<dbReference type="HAMAP" id="MF_00622">
    <property type="entry name" value="Exosome_Rrp42"/>
    <property type="match status" value="1"/>
</dbReference>
<dbReference type="InterPro" id="IPR001247">
    <property type="entry name" value="ExoRNase_PH_dom1"/>
</dbReference>
<dbReference type="InterPro" id="IPR015847">
    <property type="entry name" value="ExoRNase_PH_dom2"/>
</dbReference>
<dbReference type="InterPro" id="IPR036345">
    <property type="entry name" value="ExoRNase_PH_dom2_sf"/>
</dbReference>
<dbReference type="InterPro" id="IPR050590">
    <property type="entry name" value="Exosome_comp_Rrp42_subfam"/>
</dbReference>
<dbReference type="InterPro" id="IPR027408">
    <property type="entry name" value="PNPase/RNase_PH_dom_sf"/>
</dbReference>
<dbReference type="InterPro" id="IPR020568">
    <property type="entry name" value="Ribosomal_Su5_D2-typ_SF"/>
</dbReference>
<dbReference type="InterPro" id="IPR020869">
    <property type="entry name" value="Rrp42_archaea"/>
</dbReference>
<dbReference type="NCBIfam" id="NF003282">
    <property type="entry name" value="PRK04282.1-1"/>
    <property type="match status" value="1"/>
</dbReference>
<dbReference type="PANTHER" id="PTHR11097:SF8">
    <property type="entry name" value="EXOSOME COMPLEX COMPONENT RRP42"/>
    <property type="match status" value="1"/>
</dbReference>
<dbReference type="PANTHER" id="PTHR11097">
    <property type="entry name" value="EXOSOME COMPLEX EXONUCLEASE RIBOSOMAL RNA PROCESSING PROTEIN"/>
    <property type="match status" value="1"/>
</dbReference>
<dbReference type="Pfam" id="PF01138">
    <property type="entry name" value="RNase_PH"/>
    <property type="match status" value="1"/>
</dbReference>
<dbReference type="Pfam" id="PF03725">
    <property type="entry name" value="RNase_PH_C"/>
    <property type="match status" value="1"/>
</dbReference>
<dbReference type="SUPFAM" id="SSF55666">
    <property type="entry name" value="Ribonuclease PH domain 2-like"/>
    <property type="match status" value="1"/>
</dbReference>
<dbReference type="SUPFAM" id="SSF54211">
    <property type="entry name" value="Ribosomal protein S5 domain 2-like"/>
    <property type="match status" value="1"/>
</dbReference>
<proteinExistence type="inferred from homology"/>
<gene>
    <name evidence="1" type="primary">rrp42</name>
    <name type="ordered locus">MK0380</name>
</gene>
<protein>
    <recommendedName>
        <fullName evidence="1">Exosome complex component Rrp42</fullName>
    </recommendedName>
</protein>
<reference key="1">
    <citation type="journal article" date="2002" name="Proc. Natl. Acad. Sci. U.S.A.">
        <title>The complete genome of hyperthermophile Methanopyrus kandleri AV19 and monophyly of archaeal methanogens.</title>
        <authorList>
            <person name="Slesarev A.I."/>
            <person name="Mezhevaya K.V."/>
            <person name="Makarova K.S."/>
            <person name="Polushin N.N."/>
            <person name="Shcherbinina O.V."/>
            <person name="Shakhova V.V."/>
            <person name="Belova G.I."/>
            <person name="Aravind L."/>
            <person name="Natale D.A."/>
            <person name="Rogozin I.B."/>
            <person name="Tatusov R.L."/>
            <person name="Wolf Y.I."/>
            <person name="Stetter K.O."/>
            <person name="Malykh A.G."/>
            <person name="Koonin E.V."/>
            <person name="Kozyavkin S.A."/>
        </authorList>
    </citation>
    <scope>NUCLEOTIDE SEQUENCE [LARGE SCALE GENOMIC DNA]</scope>
    <source>
        <strain>AV19 / DSM 6324 / JCM 9639 / NBRC 100938</strain>
    </source>
</reference>
<name>RRP42_METKA</name>